<sequence length="669" mass="75006">MRIRHVVFCLLALVYGAETSDDDLDERTNIFIRDKLIPALKLAEVTKVNFTRLHLCHCSREVGCNARTTGWVPGIEFLNETDRSFYENTCYTDGSCYQSARPSPEISHFGCMDEKSVTDETEFHDTAAKVCTNNTKDPHATVWICCDKGNFCANETIIHLAPGPQQSSTWLILTILALLTFIVLLGIAIFLTRKSWEAKFDWYIRFKPKPGDPLRETENNVPMVTMGDGAGSSVPEVAPIEQQGSTMSTSAGNSFPPGIMPNNMKDMLDVLEETSGSGMGPTTLHKLTIGGQIRLTGRVGSGRFGNVSRGDYRGEAVAVKVFNALDEPAFHKETEIFETRMLRHPNVLRYIGSDRVDTGFVTELWLVTEYHPSGSLHDFLLENTVNIETYYNLMRSTASGLAFLHNQIGGSKESNKPAMAHRDIKSKNIMVKNDLTCAIGDLGLSLSKPEDAASDIIANENYKCGTVRYLAPEILNSTMQFTVFESYQCADVYSFSLVMWETLCRCEDGDVLPREAATVIPYIEWTDRDPQDAQMFDVVCTRRLRPTENPLWKDHPEMKHIMEIIKTCWNGNPSARFTSYICRKRMDERQQLLLDKKAKAVAQTAGVTVQDRKILGPQKPKDESPANGAPRIVQKEIDREDEQENWRETAKTPNGHISSNDDSSRPLLG</sequence>
<accession>P20792</accession>
<comment type="function">
    <text evidence="6 7 8 9">Probably involved in a TGF-beta pathway (PubMed:10887089). May be a receptor for TGF-beta-like ligand daf-7 (PubMed:10887089). Controls the decision of whether or not larvae enter a developmentally arrested state, known as dauer, in response to environmental conditions (PubMed:10887089). Involved in regulating entry into quiescence triggered by satiety (PubMed:18316030). Involved in sensitivity to CO2 levels (PubMed:18524955). In AWC neurons, acts to promote expression of srsx-3, a member of the GPCR family (PubMed:20713521).</text>
</comment>
<comment type="catalytic activity">
    <reaction>
        <text>L-threonyl-[receptor-protein] + ATP = O-phospho-L-threonyl-[receptor-protein] + ADP + H(+)</text>
        <dbReference type="Rhea" id="RHEA:44880"/>
        <dbReference type="Rhea" id="RHEA-COMP:11024"/>
        <dbReference type="Rhea" id="RHEA-COMP:11025"/>
        <dbReference type="ChEBI" id="CHEBI:15378"/>
        <dbReference type="ChEBI" id="CHEBI:30013"/>
        <dbReference type="ChEBI" id="CHEBI:30616"/>
        <dbReference type="ChEBI" id="CHEBI:61977"/>
        <dbReference type="ChEBI" id="CHEBI:456216"/>
        <dbReference type="EC" id="2.7.11.30"/>
    </reaction>
</comment>
<comment type="catalytic activity">
    <reaction>
        <text>L-seryl-[receptor-protein] + ATP = O-phospho-L-seryl-[receptor-protein] + ADP + H(+)</text>
        <dbReference type="Rhea" id="RHEA:18673"/>
        <dbReference type="Rhea" id="RHEA-COMP:11022"/>
        <dbReference type="Rhea" id="RHEA-COMP:11023"/>
        <dbReference type="ChEBI" id="CHEBI:15378"/>
        <dbReference type="ChEBI" id="CHEBI:29999"/>
        <dbReference type="ChEBI" id="CHEBI:30616"/>
        <dbReference type="ChEBI" id="CHEBI:83421"/>
        <dbReference type="ChEBI" id="CHEBI:456216"/>
        <dbReference type="EC" id="2.7.11.30"/>
    </reaction>
</comment>
<comment type="subunit">
    <text evidence="6">May interact with daf-4 to regulate dauer larva development.</text>
</comment>
<comment type="interaction">
    <interactant intactId="EBI-360236">
        <id>P20792</id>
    </interactant>
    <interactant intactId="EBI-313329">
        <id>Q18688</id>
        <label>daf-21</label>
    </interactant>
    <organismsDiffer>false</organismsDiffer>
    <experiments>2</experiments>
</comment>
<comment type="subcellular location">
    <subcellularLocation>
        <location>Membrane</location>
        <topology>Single-pass type I membrane protein</topology>
    </subcellularLocation>
</comment>
<comment type="alternative products">
    <event type="alternative splicing"/>
    <isoform>
        <id>P20792-1</id>
        <name>a</name>
        <sequence type="displayed"/>
    </isoform>
    <isoform>
        <id>P20792-2</id>
        <name>b</name>
        <sequence type="described" ref="VSP_007948"/>
    </isoform>
</comment>
<comment type="tissue specificity">
    <text evidence="6">Head and ventral nerve cord from embryos to adults. Expressed in many sensory neurons. Subset of head neurons show coexpression with daf-4 when dauer/nondauer decision is made. Also expressed in non-neuronal cells: membraneous sheath surrounding the distal end of the intestine and in the distal tip cell of the gonad.</text>
</comment>
<comment type="developmental stage">
    <text evidence="6">All stages.</text>
</comment>
<comment type="similarity">
    <text evidence="10">Belongs to the protein kinase superfamily. TKL Ser/Thr protein kinase family. TGFB receptor subfamily.</text>
</comment>
<protein>
    <recommendedName>
        <fullName>Cell surface receptor daf-1</fullName>
        <ecNumber>2.7.11.30</ecNumber>
    </recommendedName>
    <alternativeName>
        <fullName>Abnormal dauer formation protein 1</fullName>
    </alternativeName>
</protein>
<evidence type="ECO:0000255" key="1"/>
<evidence type="ECO:0000255" key="2">
    <source>
        <dbReference type="PROSITE-ProRule" id="PRU00159"/>
    </source>
</evidence>
<evidence type="ECO:0000255" key="3">
    <source>
        <dbReference type="PROSITE-ProRule" id="PRU00585"/>
    </source>
</evidence>
<evidence type="ECO:0000255" key="4">
    <source>
        <dbReference type="PROSITE-ProRule" id="PRU10027"/>
    </source>
</evidence>
<evidence type="ECO:0000256" key="5">
    <source>
        <dbReference type="SAM" id="MobiDB-lite"/>
    </source>
</evidence>
<evidence type="ECO:0000269" key="6">
    <source>
    </source>
</evidence>
<evidence type="ECO:0000269" key="7">
    <source>
    </source>
</evidence>
<evidence type="ECO:0000269" key="8">
    <source>
    </source>
</evidence>
<evidence type="ECO:0000269" key="9">
    <source>
    </source>
</evidence>
<evidence type="ECO:0000305" key="10"/>
<proteinExistence type="evidence at protein level"/>
<reference key="1">
    <citation type="journal article" date="1990" name="Cell">
        <title>daf-1, a C. elegans gene controlling dauer larva development, encodes a novel receptor protein kinase.</title>
        <authorList>
            <person name="Georgi L.L."/>
            <person name="Albert P.S."/>
            <person name="Riddle D.L."/>
        </authorList>
    </citation>
    <scope>NUCLEOTIDE SEQUENCE [GENOMIC DNA] (ISOFORM A)</scope>
</reference>
<reference key="2">
    <citation type="journal article" date="1998" name="Science">
        <title>Genome sequence of the nematode C. elegans: a platform for investigating biology.</title>
        <authorList>
            <consortium name="The C. elegans sequencing consortium"/>
        </authorList>
    </citation>
    <scope>NUCLEOTIDE SEQUENCE [LARGE SCALE GENOMIC DNA]</scope>
    <scope>ALTERNATIVE SPLICING</scope>
    <source>
        <strain>Bristol N2</strain>
    </source>
</reference>
<reference key="3">
    <citation type="journal article" date="2000" name="Development">
        <title>A Caenorhabditis elegans type I TGF beta receptor can function in the absence of type II kinase to promote larval development.</title>
        <authorList>
            <person name="Gunther C.V."/>
            <person name="Georgi L.L."/>
            <person name="Riddle D.L."/>
        </authorList>
    </citation>
    <scope>FUNCTION</scope>
    <scope>SUBUNIT</scope>
    <scope>TISSUE SPECIFICITY</scope>
    <scope>DEVELOPMENTAL STAGE</scope>
    <scope>MUTAGENESIS OF GLY-70; CYS-90; GLU-105 AND GLY-110</scope>
</reference>
<reference key="4">
    <citation type="journal article" date="2008" name="Cell Metab.">
        <title>Insulin, cGMP, and TGF-beta signals regulate food intake and quiescence in C. elegans: a model for satiety.</title>
        <authorList>
            <person name="You Y.J."/>
            <person name="Kim J."/>
            <person name="Raizen D.M."/>
            <person name="Avery L."/>
        </authorList>
    </citation>
    <scope>FUNCTION</scope>
</reference>
<reference key="5">
    <citation type="journal article" date="2008" name="Proc. Natl. Acad. Sci. U.S.A.">
        <title>Acute carbon dioxide avoidance in Caenorhabditis elegans.</title>
        <authorList>
            <person name="Hallem E.A."/>
            <person name="Sternberg P.W."/>
        </authorList>
    </citation>
    <scope>FUNCTION</scope>
</reference>
<reference key="6">
    <citation type="journal article" date="2010" name="Genes Dev.">
        <title>The homeodomain protein hmbx-1 maintains asymmetric gene expression in adult C. elegans olfactory neurons.</title>
        <authorList>
            <person name="Lesch B.J."/>
            <person name="Bargmann C.I."/>
        </authorList>
    </citation>
    <scope>FUNCTION</scope>
    <scope>MUTAGENESIS OF GLY-400</scope>
</reference>
<gene>
    <name type="primary">daf-1</name>
    <name type="ORF">F29C4.1</name>
</gene>
<feature type="signal peptide" evidence="1">
    <location>
        <begin position="1"/>
        <end position="19"/>
    </location>
</feature>
<feature type="chain" id="PRO_0000024430" description="Cell surface receptor daf-1">
    <location>
        <begin position="20"/>
        <end position="669"/>
    </location>
</feature>
<feature type="topological domain" description="Extracellular" evidence="1">
    <location>
        <begin position="20"/>
        <end position="170"/>
    </location>
</feature>
<feature type="transmembrane region" description="Helical" evidence="1">
    <location>
        <begin position="171"/>
        <end position="191"/>
    </location>
</feature>
<feature type="topological domain" description="Cytoplasmic" evidence="1">
    <location>
        <begin position="192"/>
        <end position="669"/>
    </location>
</feature>
<feature type="domain" description="GS" evidence="3">
    <location>
        <begin position="262"/>
        <end position="292"/>
    </location>
</feature>
<feature type="domain" description="Protein kinase" evidence="2">
    <location>
        <begin position="293"/>
        <end position="593"/>
    </location>
</feature>
<feature type="region of interest" description="Disordered" evidence="5">
    <location>
        <begin position="611"/>
        <end position="669"/>
    </location>
</feature>
<feature type="compositionally biased region" description="Basic and acidic residues" evidence="5">
    <location>
        <begin position="611"/>
        <end position="624"/>
    </location>
</feature>
<feature type="compositionally biased region" description="Basic and acidic residues" evidence="5">
    <location>
        <begin position="633"/>
        <end position="650"/>
    </location>
</feature>
<feature type="compositionally biased region" description="Polar residues" evidence="5">
    <location>
        <begin position="651"/>
        <end position="661"/>
    </location>
</feature>
<feature type="active site" description="Proton acceptor" evidence="2 4">
    <location>
        <position position="423"/>
    </location>
</feature>
<feature type="binding site" evidence="2">
    <location>
        <begin position="299"/>
        <end position="307"/>
    </location>
    <ligand>
        <name>ATP</name>
        <dbReference type="ChEBI" id="CHEBI:30616"/>
    </ligand>
</feature>
<feature type="binding site" evidence="2">
    <location>
        <position position="320"/>
    </location>
    <ligand>
        <name>ATP</name>
        <dbReference type="ChEBI" id="CHEBI:30616"/>
    </ligand>
</feature>
<feature type="glycosylation site" description="N-linked (GlcNAc...) asparagine" evidence="1">
    <location>
        <position position="49"/>
    </location>
</feature>
<feature type="glycosylation site" description="N-linked (GlcNAc...) asparagine" evidence="1">
    <location>
        <position position="79"/>
    </location>
</feature>
<feature type="glycosylation site" description="N-linked (GlcNAc...) asparagine" evidence="1">
    <location>
        <position position="133"/>
    </location>
</feature>
<feature type="glycosylation site" description="N-linked (GlcNAc...) asparagine" evidence="1">
    <location>
        <position position="154"/>
    </location>
</feature>
<feature type="splice variant" id="VSP_007948" description="In isoform b." evidence="10">
    <location>
        <position position="467"/>
    </location>
</feature>
<feature type="mutagenesis site" description="In allele p168; forms many dauer larvae." evidence="6">
    <original>G</original>
    <variation>R</variation>
    <location>
        <position position="70"/>
    </location>
</feature>
<feature type="mutagenesis site" description="In allele m138; forms many dauer larvae." evidence="6">
    <original>C</original>
    <variation>Y</variation>
    <location>
        <position position="90"/>
    </location>
</feature>
<feature type="mutagenesis site" description="In allele m122; forms many dauer larvae; when associated with E-110." evidence="6">
    <original>E</original>
    <variation>A</variation>
    <location>
        <position position="105"/>
    </location>
</feature>
<feature type="mutagenesis site" description="In allele m122; forms many dauer larvae; when associated with A-105." evidence="6">
    <original>G</original>
    <variation>E</variation>
    <location>
        <position position="110"/>
    </location>
</feature>
<feature type="mutagenesis site" description="In ky803; reduces expression of the G protein-coupled receptor (GPCR) srsx-3 in the AWC neuron." evidence="9">
    <original>G</original>
    <variation>E</variation>
    <location>
        <position position="400"/>
    </location>
</feature>
<keyword id="KW-0025">Alternative splicing</keyword>
<keyword id="KW-0067">ATP-binding</keyword>
<keyword id="KW-0217">Developmental protein</keyword>
<keyword id="KW-0325">Glycoprotein</keyword>
<keyword id="KW-0418">Kinase</keyword>
<keyword id="KW-0472">Membrane</keyword>
<keyword id="KW-0547">Nucleotide-binding</keyword>
<keyword id="KW-0675">Receptor</keyword>
<keyword id="KW-1185">Reference proteome</keyword>
<keyword id="KW-0723">Serine/threonine-protein kinase</keyword>
<keyword id="KW-0732">Signal</keyword>
<keyword id="KW-0808">Transferase</keyword>
<keyword id="KW-0812">Transmembrane</keyword>
<keyword id="KW-1133">Transmembrane helix</keyword>
<dbReference type="EC" id="2.7.11.30"/>
<dbReference type="EMBL" id="M32877">
    <property type="protein sequence ID" value="AAA28001.1"/>
    <property type="molecule type" value="Genomic_DNA"/>
</dbReference>
<dbReference type="EMBL" id="FO080227">
    <property type="protein sequence ID" value="CCD62175.1"/>
    <property type="molecule type" value="Genomic_DNA"/>
</dbReference>
<dbReference type="EMBL" id="FO080227">
    <property type="protein sequence ID" value="CCD62176.1"/>
    <property type="molecule type" value="Genomic_DNA"/>
</dbReference>
<dbReference type="PIR" id="A35103">
    <property type="entry name" value="A35103"/>
</dbReference>
<dbReference type="RefSeq" id="NP_001023159.1">
    <molecule id="P20792-1"/>
    <property type="nucleotide sequence ID" value="NM_001027988.6"/>
</dbReference>
<dbReference type="RefSeq" id="NP_001023160.1">
    <molecule id="P20792-2"/>
    <property type="nucleotide sequence ID" value="NM_001027989.6"/>
</dbReference>
<dbReference type="SMR" id="P20792"/>
<dbReference type="BioGRID" id="41992">
    <property type="interactions" value="3"/>
</dbReference>
<dbReference type="FunCoup" id="P20792">
    <property type="interactions" value="1408"/>
</dbReference>
<dbReference type="IntAct" id="P20792">
    <property type="interactions" value="1"/>
</dbReference>
<dbReference type="STRING" id="6239.F29C4.1a.1"/>
<dbReference type="GlyCosmos" id="P20792">
    <property type="glycosylation" value="4 sites, No reported glycans"/>
</dbReference>
<dbReference type="PaxDb" id="6239-F29C4.1a"/>
<dbReference type="PeptideAtlas" id="P20792"/>
<dbReference type="EnsemblMetazoa" id="F29C4.1a.1">
    <molecule id="P20792-1"/>
    <property type="protein sequence ID" value="F29C4.1a.1"/>
    <property type="gene ID" value="WBGene00000897"/>
</dbReference>
<dbReference type="EnsemblMetazoa" id="F29C4.1b.1">
    <molecule id="P20792-2"/>
    <property type="protein sequence ID" value="F29C4.1b.1"/>
    <property type="gene ID" value="WBGene00000897"/>
</dbReference>
<dbReference type="GeneID" id="176829"/>
<dbReference type="KEGG" id="cel:CELE_F29C4.1"/>
<dbReference type="UCSC" id="F29C4.1a">
    <molecule id="P20792-1"/>
    <property type="organism name" value="c. elegans"/>
</dbReference>
<dbReference type="AGR" id="WB:WBGene00000897"/>
<dbReference type="CTD" id="176829"/>
<dbReference type="WormBase" id="F29C4.1a">
    <molecule id="P20792-1"/>
    <property type="protein sequence ID" value="CE17719"/>
    <property type="gene ID" value="WBGene00000897"/>
    <property type="gene designation" value="daf-1"/>
</dbReference>
<dbReference type="WormBase" id="F29C4.1b">
    <molecule id="P20792-2"/>
    <property type="protein sequence ID" value="CE31492"/>
    <property type="gene ID" value="WBGene00000897"/>
    <property type="gene designation" value="daf-1"/>
</dbReference>
<dbReference type="eggNOG" id="KOG2052">
    <property type="taxonomic scope" value="Eukaryota"/>
</dbReference>
<dbReference type="GeneTree" id="ENSGT00940000168401"/>
<dbReference type="InParanoid" id="P20792"/>
<dbReference type="OMA" id="MWETLCR"/>
<dbReference type="OrthoDB" id="69842at2759"/>
<dbReference type="PhylomeDB" id="P20792"/>
<dbReference type="BRENDA" id="2.7.10.2">
    <property type="organism ID" value="1045"/>
</dbReference>
<dbReference type="Reactome" id="R-CEL-2173788">
    <property type="pathway name" value="Downregulation of TGF-beta receptor signaling"/>
</dbReference>
<dbReference type="Reactome" id="R-CEL-2173789">
    <property type="pathway name" value="TGF-beta receptor signaling activates SMADs"/>
</dbReference>
<dbReference type="Reactome" id="R-CEL-2173791">
    <property type="pathway name" value="TGF-beta receptor signaling in EMT (epithelial to mesenchymal transition)"/>
</dbReference>
<dbReference type="SignaLink" id="P20792"/>
<dbReference type="PRO" id="PR:P20792"/>
<dbReference type="Proteomes" id="UP000001940">
    <property type="component" value="Chromosome IV"/>
</dbReference>
<dbReference type="Bgee" id="WBGene00000897">
    <property type="expression patterns" value="Expressed in germ line (C elegans) and 4 other cell types or tissues"/>
</dbReference>
<dbReference type="GO" id="GO:0048179">
    <property type="term" value="C:activin receptor complex"/>
    <property type="evidence" value="ECO:0000318"/>
    <property type="project" value="GO_Central"/>
</dbReference>
<dbReference type="GO" id="GO:0005886">
    <property type="term" value="C:plasma membrane"/>
    <property type="evidence" value="ECO:0000250"/>
    <property type="project" value="WormBase"/>
</dbReference>
<dbReference type="GO" id="GO:0048185">
    <property type="term" value="F:activin binding"/>
    <property type="evidence" value="ECO:0000318"/>
    <property type="project" value="GO_Central"/>
</dbReference>
<dbReference type="GO" id="GO:0016361">
    <property type="term" value="F:activin receptor activity, type I"/>
    <property type="evidence" value="ECO:0000318"/>
    <property type="project" value="GO_Central"/>
</dbReference>
<dbReference type="GO" id="GO:0005524">
    <property type="term" value="F:ATP binding"/>
    <property type="evidence" value="ECO:0007669"/>
    <property type="project" value="UniProtKB-KW"/>
</dbReference>
<dbReference type="GO" id="GO:0005024">
    <property type="term" value="F:transforming growth factor beta receptor activity"/>
    <property type="evidence" value="ECO:0000250"/>
    <property type="project" value="WormBase"/>
</dbReference>
<dbReference type="GO" id="GO:0032924">
    <property type="term" value="P:activin receptor signaling pathway"/>
    <property type="evidence" value="ECO:0000318"/>
    <property type="project" value="GO_Central"/>
</dbReference>
<dbReference type="GO" id="GO:0071363">
    <property type="term" value="P:cellular response to growth factor stimulus"/>
    <property type="evidence" value="ECO:0000318"/>
    <property type="project" value="GO_Central"/>
</dbReference>
<dbReference type="GO" id="GO:0043053">
    <property type="term" value="P:dauer entry"/>
    <property type="evidence" value="ECO:0000316"/>
    <property type="project" value="UniProtKB"/>
</dbReference>
<dbReference type="GO" id="GO:0040024">
    <property type="term" value="P:dauer larval development"/>
    <property type="evidence" value="ECO:0000315"/>
    <property type="project" value="WormBase"/>
</dbReference>
<dbReference type="GO" id="GO:0050829">
    <property type="term" value="P:defense response to Gram-negative bacterium"/>
    <property type="evidence" value="ECO:0000315"/>
    <property type="project" value="WormBase"/>
</dbReference>
<dbReference type="GO" id="GO:0016045">
    <property type="term" value="P:detection of bacterium"/>
    <property type="evidence" value="ECO:0000315"/>
    <property type="project" value="UniProtKB"/>
</dbReference>
<dbReference type="GO" id="GO:0008340">
    <property type="term" value="P:determination of adult lifespan"/>
    <property type="evidence" value="ECO:0000315"/>
    <property type="project" value="WormBase"/>
</dbReference>
<dbReference type="GO" id="GO:0030536">
    <property type="term" value="P:larval feeding behavior"/>
    <property type="evidence" value="ECO:0000315"/>
    <property type="project" value="UniProtKB"/>
</dbReference>
<dbReference type="GO" id="GO:0061067">
    <property type="term" value="P:negative regulation of dauer larval development"/>
    <property type="evidence" value="ECO:0000315"/>
    <property type="project" value="UniProtKB"/>
</dbReference>
<dbReference type="GO" id="GO:0007399">
    <property type="term" value="P:nervous system development"/>
    <property type="evidence" value="ECO:0000318"/>
    <property type="project" value="GO_Central"/>
</dbReference>
<dbReference type="GO" id="GO:0045944">
    <property type="term" value="P:positive regulation of transcription by RNA polymerase II"/>
    <property type="evidence" value="ECO:0000315"/>
    <property type="project" value="WormBase"/>
</dbReference>
<dbReference type="GO" id="GO:0061065">
    <property type="term" value="P:regulation of dauer larval development"/>
    <property type="evidence" value="ECO:0000315"/>
    <property type="project" value="UniProtKB"/>
</dbReference>
<dbReference type="GO" id="GO:1903998">
    <property type="term" value="P:regulation of eating behavior"/>
    <property type="evidence" value="ECO:0000315"/>
    <property type="project" value="UniProtKB"/>
</dbReference>
<dbReference type="GO" id="GO:0043051">
    <property type="term" value="P:regulation of nematode pharyngeal pumping"/>
    <property type="evidence" value="ECO:0000315"/>
    <property type="project" value="WormBase"/>
</dbReference>
<dbReference type="GO" id="GO:0007179">
    <property type="term" value="P:transforming growth factor beta receptor signaling pathway"/>
    <property type="evidence" value="ECO:0000250"/>
    <property type="project" value="WormBase"/>
</dbReference>
<dbReference type="CDD" id="cd14056">
    <property type="entry name" value="STKc_TGFbR_I"/>
    <property type="match status" value="1"/>
</dbReference>
<dbReference type="FunFam" id="1.10.510.10:FF:000304">
    <property type="entry name" value="Receptor protein serine/threonine kinase"/>
    <property type="match status" value="1"/>
</dbReference>
<dbReference type="Gene3D" id="3.30.200.20">
    <property type="entry name" value="Phosphorylase Kinase, domain 1"/>
    <property type="match status" value="1"/>
</dbReference>
<dbReference type="Gene3D" id="1.10.510.10">
    <property type="entry name" value="Transferase(Phosphotransferase) domain 1"/>
    <property type="match status" value="1"/>
</dbReference>
<dbReference type="InterPro" id="IPR003605">
    <property type="entry name" value="GS_dom"/>
</dbReference>
<dbReference type="InterPro" id="IPR011009">
    <property type="entry name" value="Kinase-like_dom_sf"/>
</dbReference>
<dbReference type="InterPro" id="IPR000719">
    <property type="entry name" value="Prot_kinase_dom"/>
</dbReference>
<dbReference type="InterPro" id="IPR017441">
    <property type="entry name" value="Protein_kinase_ATP_BS"/>
</dbReference>
<dbReference type="InterPro" id="IPR001245">
    <property type="entry name" value="Ser-Thr/Tyr_kinase_cat_dom"/>
</dbReference>
<dbReference type="InterPro" id="IPR008271">
    <property type="entry name" value="Ser/Thr_kinase_AS"/>
</dbReference>
<dbReference type="InterPro" id="IPR000333">
    <property type="entry name" value="TGFB_receptor"/>
</dbReference>
<dbReference type="PANTHER" id="PTHR23255:SF105">
    <property type="entry name" value="CELL SURFACE RECEPTOR DAF-1"/>
    <property type="match status" value="1"/>
</dbReference>
<dbReference type="PANTHER" id="PTHR23255">
    <property type="entry name" value="TRANSFORMING GROWTH FACTOR-BETA RECEPTOR TYPE I AND II"/>
    <property type="match status" value="1"/>
</dbReference>
<dbReference type="Pfam" id="PF07714">
    <property type="entry name" value="PK_Tyr_Ser-Thr"/>
    <property type="match status" value="1"/>
</dbReference>
<dbReference type="SMART" id="SM00467">
    <property type="entry name" value="GS"/>
    <property type="match status" value="1"/>
</dbReference>
<dbReference type="SMART" id="SM00220">
    <property type="entry name" value="S_TKc"/>
    <property type="match status" value="1"/>
</dbReference>
<dbReference type="SUPFAM" id="SSF56112">
    <property type="entry name" value="Protein kinase-like (PK-like)"/>
    <property type="match status" value="1"/>
</dbReference>
<dbReference type="PROSITE" id="PS51256">
    <property type="entry name" value="GS"/>
    <property type="match status" value="1"/>
</dbReference>
<dbReference type="PROSITE" id="PS00107">
    <property type="entry name" value="PROTEIN_KINASE_ATP"/>
    <property type="match status" value="1"/>
</dbReference>
<dbReference type="PROSITE" id="PS50011">
    <property type="entry name" value="PROTEIN_KINASE_DOM"/>
    <property type="match status" value="1"/>
</dbReference>
<dbReference type="PROSITE" id="PS00108">
    <property type="entry name" value="PROTEIN_KINASE_ST"/>
    <property type="match status" value="1"/>
</dbReference>
<name>DAF1_CAEEL</name>
<organism>
    <name type="scientific">Caenorhabditis elegans</name>
    <dbReference type="NCBI Taxonomy" id="6239"/>
    <lineage>
        <taxon>Eukaryota</taxon>
        <taxon>Metazoa</taxon>
        <taxon>Ecdysozoa</taxon>
        <taxon>Nematoda</taxon>
        <taxon>Chromadorea</taxon>
        <taxon>Rhabditida</taxon>
        <taxon>Rhabditina</taxon>
        <taxon>Rhabditomorpha</taxon>
        <taxon>Rhabditoidea</taxon>
        <taxon>Rhabditidae</taxon>
        <taxon>Peloderinae</taxon>
        <taxon>Caenorhabditis</taxon>
    </lineage>
</organism>